<evidence type="ECO:0000250" key="1">
    <source>
        <dbReference type="UniProtKB" id="Q8BGV5"/>
    </source>
</evidence>
<evidence type="ECO:0000255" key="2">
    <source>
        <dbReference type="PROSITE-ProRule" id="PRU00042"/>
    </source>
</evidence>
<evidence type="ECO:0000255" key="3">
    <source>
        <dbReference type="PROSITE-ProRule" id="PRU00119"/>
    </source>
</evidence>
<evidence type="ECO:0000256" key="4">
    <source>
        <dbReference type="SAM" id="MobiDB-lite"/>
    </source>
</evidence>
<evidence type="ECO:0000269" key="5">
    <source>
    </source>
</evidence>
<evidence type="ECO:0000269" key="6">
    <source>
    </source>
</evidence>
<evidence type="ECO:0000305" key="7"/>
<evidence type="ECO:0007744" key="8">
    <source>
    </source>
</evidence>
<reference key="1">
    <citation type="journal article" date="2004" name="Genome Res.">
        <title>The status, quality, and expansion of the NIH full-length cDNA project: the Mammalian Gene Collection (MGC).</title>
        <authorList>
            <consortium name="The MGC Project Team"/>
        </authorList>
    </citation>
    <scope>NUCLEOTIDE SEQUENCE [LARGE SCALE MRNA]</scope>
    <source>
        <tissue>Testis</tissue>
    </source>
</reference>
<reference key="2">
    <citation type="journal article" date="1990" name="Genomics">
        <title>cDNA isolation, expression analysis, and chromosomal localization of two human zinc finger genes.</title>
        <authorList>
            <person name="Lania L."/>
            <person name="Donti E."/>
            <person name="Pannuti A."/>
            <person name="Pascucci A."/>
            <person name="Pengue G."/>
            <person name="Feliciello I."/>
            <person name="la Mantia G."/>
            <person name="Lanfrancone L."/>
            <person name="Pelicci P.-G."/>
        </authorList>
    </citation>
    <scope>NUCLEOTIDE SEQUENCE [MRNA] OF 33-575</scope>
    <scope>TISSUE SPECIFICITY</scope>
    <source>
        <tissue>Placenta</tissue>
    </source>
</reference>
<reference key="3">
    <citation type="journal article" date="2002" name="Mol. Cell. Biol.">
        <title>Identification of mZnf8, a mouse Kruppel-like transcriptional repressor, as a novel nuclear interaction partner of Smad1.</title>
        <authorList>
            <person name="Jiao K."/>
            <person name="Zhou Y."/>
            <person name="Hogan B.L.M."/>
        </authorList>
    </citation>
    <scope>INTERACTION WITH SMAD3; SMAD4 AND SMAD5</scope>
</reference>
<reference key="4">
    <citation type="journal article" date="2017" name="Nat. Struct. Mol. Biol.">
        <title>Site-specific mapping of the human SUMO proteome reveals co-modification with phosphorylation.</title>
        <authorList>
            <person name="Hendriks I.A."/>
            <person name="Lyon D."/>
            <person name="Young C."/>
            <person name="Jensen L.J."/>
            <person name="Vertegaal A.C."/>
            <person name="Nielsen M.L."/>
        </authorList>
    </citation>
    <scope>SUMOYLATION [LARGE SCALE ANALYSIS] AT LYS-174; LYS-249; LYS-441 AND LYS-545</scope>
    <scope>IDENTIFICATION BY MASS SPECTROMETRY [LARGE SCALE ANALYSIS]</scope>
</reference>
<feature type="chain" id="PRO_0000047331" description="Zinc finger protein 8">
    <location>
        <begin position="1"/>
        <end position="575"/>
    </location>
</feature>
<feature type="domain" description="KRAB" evidence="3">
    <location>
        <begin position="25"/>
        <end position="96"/>
    </location>
</feature>
<feature type="zinc finger region" description="C2H2-type 1" evidence="2">
    <location>
        <begin position="257"/>
        <end position="279"/>
    </location>
</feature>
<feature type="zinc finger region" description="C2H2-type 2" evidence="2">
    <location>
        <begin position="285"/>
        <end position="307"/>
    </location>
</feature>
<feature type="zinc finger region" description="C2H2-type 3" evidence="2">
    <location>
        <begin position="313"/>
        <end position="335"/>
    </location>
</feature>
<feature type="zinc finger region" description="C2H2-type 4" evidence="2">
    <location>
        <begin position="341"/>
        <end position="363"/>
    </location>
</feature>
<feature type="zinc finger region" description="C2H2-type 5" evidence="2">
    <location>
        <begin position="369"/>
        <end position="391"/>
    </location>
</feature>
<feature type="zinc finger region" description="C2H2-type 6" evidence="2">
    <location>
        <begin position="397"/>
        <end position="419"/>
    </location>
</feature>
<feature type="zinc finger region" description="C2H2-type 7" evidence="2">
    <location>
        <begin position="467"/>
        <end position="489"/>
    </location>
</feature>
<feature type="region of interest" description="Disordered" evidence="4">
    <location>
        <begin position="92"/>
        <end position="130"/>
    </location>
</feature>
<feature type="region of interest" description="Disordered" evidence="4">
    <location>
        <begin position="210"/>
        <end position="237"/>
    </location>
</feature>
<feature type="region of interest" description="Disordered" evidence="4">
    <location>
        <begin position="488"/>
        <end position="533"/>
    </location>
</feature>
<feature type="compositionally biased region" description="Basic and acidic residues" evidence="4">
    <location>
        <begin position="98"/>
        <end position="123"/>
    </location>
</feature>
<feature type="compositionally biased region" description="Polar residues" evidence="4">
    <location>
        <begin position="210"/>
        <end position="224"/>
    </location>
</feature>
<feature type="compositionally biased region" description="Polar residues" evidence="4">
    <location>
        <begin position="511"/>
        <end position="523"/>
    </location>
</feature>
<feature type="cross-link" description="Glycyl lysine isopeptide (Lys-Gly) (interchain with G-Cter in SUMO2)" evidence="8">
    <location>
        <position position="174"/>
    </location>
</feature>
<feature type="cross-link" description="Glycyl lysine isopeptide (Lys-Gly) (interchain with G-Cter in SUMO2)" evidence="8">
    <location>
        <position position="249"/>
    </location>
</feature>
<feature type="cross-link" description="Glycyl lysine isopeptide (Lys-Gly) (interchain with G-Cter in SUMO2)" evidence="8">
    <location>
        <position position="441"/>
    </location>
</feature>
<feature type="cross-link" description="Glycyl lysine isopeptide (Lys-Gly) (interchain with G-Cter in SUMO2)" evidence="8">
    <location>
        <position position="545"/>
    </location>
</feature>
<feature type="sequence conflict" description="In Ref. 2; AAA61314." evidence="7" ref="2">
    <original>H</original>
    <variation>Y</variation>
    <location>
        <position position="60"/>
    </location>
</feature>
<feature type="sequence conflict" description="In Ref. 2; AAA61314." evidence="7" ref="2">
    <original>G</original>
    <variation>A</variation>
    <location>
        <position position="172"/>
    </location>
</feature>
<feature type="sequence conflict" description="In Ref. 2; AAA61314." evidence="7" ref="2">
    <original>A</original>
    <variation>R</variation>
    <location>
        <position position="528"/>
    </location>
</feature>
<dbReference type="EMBL" id="BC039323">
    <property type="protein sequence ID" value="AAH39323.1"/>
    <property type="molecule type" value="mRNA"/>
</dbReference>
<dbReference type="EMBL" id="M29581">
    <property type="protein sequence ID" value="AAA61314.1"/>
    <property type="molecule type" value="mRNA"/>
</dbReference>
<dbReference type="CCDS" id="CCDS12974.1"/>
<dbReference type="PIR" id="B34612">
    <property type="entry name" value="B34612"/>
</dbReference>
<dbReference type="RefSeq" id="NP_066575.2">
    <property type="nucleotide sequence ID" value="NM_021089.3"/>
</dbReference>
<dbReference type="SMR" id="P17098"/>
<dbReference type="BioGRID" id="113386">
    <property type="interactions" value="53"/>
</dbReference>
<dbReference type="FunCoup" id="P17098">
    <property type="interactions" value="477"/>
</dbReference>
<dbReference type="IntAct" id="P17098">
    <property type="interactions" value="32"/>
</dbReference>
<dbReference type="MINT" id="P17098"/>
<dbReference type="STRING" id="9606.ENSP00000477716"/>
<dbReference type="GlyGen" id="P17098">
    <property type="glycosylation" value="1 site, 1 O-linked glycan (1 site)"/>
</dbReference>
<dbReference type="iPTMnet" id="P17098"/>
<dbReference type="PhosphoSitePlus" id="P17098"/>
<dbReference type="BioMuta" id="ZNF8"/>
<dbReference type="DMDM" id="55977777"/>
<dbReference type="jPOST" id="P17098"/>
<dbReference type="MassIVE" id="P17098"/>
<dbReference type="PaxDb" id="9606-ENSP00000477716"/>
<dbReference type="PeptideAtlas" id="P17098"/>
<dbReference type="ProteomicsDB" id="53457"/>
<dbReference type="Pumba" id="P17098"/>
<dbReference type="Antibodypedia" id="74823">
    <property type="antibodies" value="96 antibodies from 15 providers"/>
</dbReference>
<dbReference type="DNASU" id="7554"/>
<dbReference type="Ensembl" id="ENST00000621650.2">
    <property type="protein sequence ID" value="ENSP00000477716.1"/>
    <property type="gene ID" value="ENSG00000278129.2"/>
</dbReference>
<dbReference type="GeneID" id="7554"/>
<dbReference type="KEGG" id="hsa:7554"/>
<dbReference type="MANE-Select" id="ENST00000621650.2">
    <property type="protein sequence ID" value="ENSP00000477716.1"/>
    <property type="RefSeq nucleotide sequence ID" value="NM_021089.3"/>
    <property type="RefSeq protein sequence ID" value="NP_066575.2"/>
</dbReference>
<dbReference type="UCSC" id="uc002qry.2">
    <property type="organism name" value="human"/>
</dbReference>
<dbReference type="AGR" id="HGNC:13154"/>
<dbReference type="CTD" id="7554"/>
<dbReference type="GeneCards" id="ZNF8"/>
<dbReference type="HGNC" id="HGNC:13154">
    <property type="gene designation" value="ZNF8"/>
</dbReference>
<dbReference type="HPA" id="ENSG00000278129">
    <property type="expression patterns" value="Low tissue specificity"/>
</dbReference>
<dbReference type="MIM" id="194532">
    <property type="type" value="gene"/>
</dbReference>
<dbReference type="neXtProt" id="NX_P17098"/>
<dbReference type="OpenTargets" id="ENSG00000278129"/>
<dbReference type="PharmGKB" id="PA37728"/>
<dbReference type="VEuPathDB" id="HostDB:ENSG00000278129"/>
<dbReference type="eggNOG" id="KOG1721">
    <property type="taxonomic scope" value="Eukaryota"/>
</dbReference>
<dbReference type="GeneTree" id="ENSGT00940000162352"/>
<dbReference type="HOGENOM" id="CLU_002678_57_1_1"/>
<dbReference type="InParanoid" id="P17098"/>
<dbReference type="OMA" id="CTYDSQV"/>
<dbReference type="OrthoDB" id="6354171at2759"/>
<dbReference type="PAN-GO" id="P17098">
    <property type="GO annotations" value="4 GO annotations based on evolutionary models"/>
</dbReference>
<dbReference type="PhylomeDB" id="P17098"/>
<dbReference type="TreeFam" id="TF337055"/>
<dbReference type="PathwayCommons" id="P17098"/>
<dbReference type="SignaLink" id="P17098"/>
<dbReference type="BioGRID-ORCS" id="7554">
    <property type="hits" value="14 hits in 1174 CRISPR screens"/>
</dbReference>
<dbReference type="GeneWiki" id="ZNF8"/>
<dbReference type="GenomeRNAi" id="7554"/>
<dbReference type="Pharos" id="P17098">
    <property type="development level" value="Tdark"/>
</dbReference>
<dbReference type="PRO" id="PR:P17098"/>
<dbReference type="Proteomes" id="UP000005640">
    <property type="component" value="Chromosome 19"/>
</dbReference>
<dbReference type="RNAct" id="P17098">
    <property type="molecule type" value="protein"/>
</dbReference>
<dbReference type="Bgee" id="ENSG00000278129">
    <property type="expression patterns" value="Expressed in cortical plate and 169 other cell types or tissues"/>
</dbReference>
<dbReference type="GO" id="GO:0005634">
    <property type="term" value="C:nucleus"/>
    <property type="evidence" value="ECO:0000318"/>
    <property type="project" value="GO_Central"/>
</dbReference>
<dbReference type="GO" id="GO:0003677">
    <property type="term" value="F:DNA binding"/>
    <property type="evidence" value="ECO:0000303"/>
    <property type="project" value="UniProtKB"/>
</dbReference>
<dbReference type="GO" id="GO:0000981">
    <property type="term" value="F:DNA-binding transcription factor activity, RNA polymerase II-specific"/>
    <property type="evidence" value="ECO:0000318"/>
    <property type="project" value="GO_Central"/>
</dbReference>
<dbReference type="GO" id="GO:0000978">
    <property type="term" value="F:RNA polymerase II cis-regulatory region sequence-specific DNA binding"/>
    <property type="evidence" value="ECO:0000318"/>
    <property type="project" value="GO_Central"/>
</dbReference>
<dbReference type="GO" id="GO:0008270">
    <property type="term" value="F:zinc ion binding"/>
    <property type="evidence" value="ECO:0000303"/>
    <property type="project" value="UniProtKB"/>
</dbReference>
<dbReference type="GO" id="GO:0030509">
    <property type="term" value="P:BMP signaling pathway"/>
    <property type="evidence" value="ECO:0007669"/>
    <property type="project" value="Ensembl"/>
</dbReference>
<dbReference type="GO" id="GO:0000122">
    <property type="term" value="P:negative regulation of transcription by RNA polymerase II"/>
    <property type="evidence" value="ECO:0000318"/>
    <property type="project" value="GO_Central"/>
</dbReference>
<dbReference type="CDD" id="cd07765">
    <property type="entry name" value="KRAB_A-box"/>
    <property type="match status" value="1"/>
</dbReference>
<dbReference type="FunFam" id="3.30.160.60:FF:000016">
    <property type="entry name" value="zinc finger protein 37 homolog"/>
    <property type="match status" value="1"/>
</dbReference>
<dbReference type="FunFam" id="3.30.160.60:FF:001270">
    <property type="entry name" value="zinc finger protein 583 isoform X1"/>
    <property type="match status" value="1"/>
</dbReference>
<dbReference type="FunFam" id="3.30.160.60:FF:000951">
    <property type="entry name" value="Zinc finger protein 8"/>
    <property type="match status" value="2"/>
</dbReference>
<dbReference type="FunFam" id="3.30.160.60:FF:001524">
    <property type="entry name" value="Zinc finger protein 8"/>
    <property type="match status" value="1"/>
</dbReference>
<dbReference type="FunFam" id="3.30.160.60:FF:002121">
    <property type="entry name" value="zinc finger protein 8"/>
    <property type="match status" value="1"/>
</dbReference>
<dbReference type="FunFam" id="3.30.160.60:FF:000939">
    <property type="entry name" value="zinc finger protein 8 isoform X1"/>
    <property type="match status" value="1"/>
</dbReference>
<dbReference type="Gene3D" id="6.10.140.140">
    <property type="match status" value="1"/>
</dbReference>
<dbReference type="Gene3D" id="3.30.160.60">
    <property type="entry name" value="Classic Zinc Finger"/>
    <property type="match status" value="7"/>
</dbReference>
<dbReference type="InterPro" id="IPR001909">
    <property type="entry name" value="KRAB"/>
</dbReference>
<dbReference type="InterPro" id="IPR036051">
    <property type="entry name" value="KRAB_dom_sf"/>
</dbReference>
<dbReference type="InterPro" id="IPR036236">
    <property type="entry name" value="Znf_C2H2_sf"/>
</dbReference>
<dbReference type="InterPro" id="IPR013087">
    <property type="entry name" value="Znf_C2H2_type"/>
</dbReference>
<dbReference type="PANTHER" id="PTHR24381:SF393">
    <property type="entry name" value="CHROMATIN-LINKED ADAPTOR FOR MSL PROTEINS, ISOFORM B"/>
    <property type="match status" value="1"/>
</dbReference>
<dbReference type="PANTHER" id="PTHR24381">
    <property type="entry name" value="ZINC FINGER PROTEIN"/>
    <property type="match status" value="1"/>
</dbReference>
<dbReference type="Pfam" id="PF01352">
    <property type="entry name" value="KRAB"/>
    <property type="match status" value="1"/>
</dbReference>
<dbReference type="Pfam" id="PF00096">
    <property type="entry name" value="zf-C2H2"/>
    <property type="match status" value="7"/>
</dbReference>
<dbReference type="SMART" id="SM00349">
    <property type="entry name" value="KRAB"/>
    <property type="match status" value="1"/>
</dbReference>
<dbReference type="SMART" id="SM00355">
    <property type="entry name" value="ZnF_C2H2"/>
    <property type="match status" value="7"/>
</dbReference>
<dbReference type="SUPFAM" id="SSF57667">
    <property type="entry name" value="beta-beta-alpha zinc fingers"/>
    <property type="match status" value="4"/>
</dbReference>
<dbReference type="SUPFAM" id="SSF109640">
    <property type="entry name" value="KRAB domain (Kruppel-associated box)"/>
    <property type="match status" value="1"/>
</dbReference>
<dbReference type="PROSITE" id="PS50805">
    <property type="entry name" value="KRAB"/>
    <property type="match status" value="1"/>
</dbReference>
<dbReference type="PROSITE" id="PS00028">
    <property type="entry name" value="ZINC_FINGER_C2H2_1"/>
    <property type="match status" value="7"/>
</dbReference>
<dbReference type="PROSITE" id="PS50157">
    <property type="entry name" value="ZINC_FINGER_C2H2_2"/>
    <property type="match status" value="7"/>
</dbReference>
<keyword id="KW-0238">DNA-binding</keyword>
<keyword id="KW-1017">Isopeptide bond</keyword>
<keyword id="KW-0479">Metal-binding</keyword>
<keyword id="KW-0539">Nucleus</keyword>
<keyword id="KW-1267">Proteomics identification</keyword>
<keyword id="KW-1185">Reference proteome</keyword>
<keyword id="KW-0677">Repeat</keyword>
<keyword id="KW-0804">Transcription</keyword>
<keyword id="KW-0805">Transcription regulation</keyword>
<keyword id="KW-0832">Ubl conjugation</keyword>
<keyword id="KW-0862">Zinc</keyword>
<keyword id="KW-0863">Zinc-finger</keyword>
<comment type="function">
    <text evidence="1">Transcriptional repressor. May modulate BMP and TGF-beta signal transduction, through its interaction with SMAD proteins.</text>
</comment>
<comment type="subunit">
    <text evidence="1 5">Interacts with SMAD1 (via MH1 and MH2 domains) (By similarity). Interacts with SMAD5 (PubMed:12370310). Interacts weakly with SMAD2 (By similarity). Interacts weakly with SMAD3 and SMAD4 (PubMed:12370310).</text>
</comment>
<comment type="interaction">
    <interactant intactId="EBI-2555757">
        <id>P17098</id>
    </interactant>
    <interactant intactId="EBI-541426">
        <id>Q9BXS5</id>
        <label>AP1M1</label>
    </interactant>
    <organismsDiffer>false</organismsDiffer>
    <experiments>3</experiments>
</comment>
<comment type="interaction">
    <interactant intactId="EBI-2555757">
        <id>P17098</id>
    </interactant>
    <interactant intactId="EBI-348259">
        <id>Q96EZ8</id>
        <label>MCRS1</label>
    </interactant>
    <organismsDiffer>false</organismsDiffer>
    <experiments>3</experiments>
</comment>
<comment type="interaction">
    <interactant intactId="EBI-2555757">
        <id>P17098</id>
    </interactant>
    <interactant intactId="EBI-10265237">
        <id>Q8NC26</id>
        <label>ZNF114</label>
    </interactant>
    <organismsDiffer>false</organismsDiffer>
    <experiments>3</experiments>
</comment>
<comment type="subcellular location">
    <subcellularLocation>
        <location evidence="7">Nucleus</location>
    </subcellularLocation>
</comment>
<comment type="tissue specificity">
    <text evidence="6">Ubiquitously present in many human cell lines of different embryological derivation.</text>
</comment>
<comment type="similarity">
    <text evidence="7">Belongs to the krueppel C2H2-type zinc-finger protein family.</text>
</comment>
<protein>
    <recommendedName>
        <fullName>Zinc finger protein 8</fullName>
    </recommendedName>
    <alternativeName>
        <fullName>Zinc finger protein HF.18</fullName>
    </alternativeName>
</protein>
<accession>P17098</accession>
<accession>Q6PI99</accession>
<name>ZNF8_HUMAN</name>
<gene>
    <name type="primary">ZNF8</name>
</gene>
<sequence length="575" mass="64970">MDPEDEGVAGVMSVGPPAARLQEPVTFRDVAVDFTQEEWGQLDPTQRILYRDVMLETFGHLLSIGPELPKPEVISQLEQGTELWVAERGTTQGCHPAWEPRSESQASRKEEGLPEEEPSHVTGREGFPTDAPYPTTLGKDRECQSQSLALKEQNNLKQLEFGLKEAPVQDQGYKTLRLRENCVLSSSPNPFPEISRGEYLYTYDSQITDSEHNSSLVSQQTGSPGKQPGENSDCHRDSSQAIPITELTKSQVQDKPYKCTDCGKSFNHNAHLTVHKRIHTGERPYMCKECGKAFSQNSSLVQHERIHTGDKPYKCAECGKSFCHSTHLTVHRRIHTGEKPYECQDCGRAFNQNSSLGRHKRTHTGEKPYTCSVCGKSFSRTTCLFLHLRTHTEERPYECNHCGKGFRHSSSLAQHQRKHAGEKPFECRQRLIFEQTPALTKHEWTEALGCDPPLSQDERTHRSDRPFKCNQCGKCFIQSSHLIRHQITHTREEQPHGRSRRREQSSSRNSHLVQHQHPNSRKSSAGGAKAGQPESRALALFDIQKIMQEKNPVHVIGVEEPSVGASMLFDIREST</sequence>
<proteinExistence type="evidence at protein level"/>
<organism>
    <name type="scientific">Homo sapiens</name>
    <name type="common">Human</name>
    <dbReference type="NCBI Taxonomy" id="9606"/>
    <lineage>
        <taxon>Eukaryota</taxon>
        <taxon>Metazoa</taxon>
        <taxon>Chordata</taxon>
        <taxon>Craniata</taxon>
        <taxon>Vertebrata</taxon>
        <taxon>Euteleostomi</taxon>
        <taxon>Mammalia</taxon>
        <taxon>Eutheria</taxon>
        <taxon>Euarchontoglires</taxon>
        <taxon>Primates</taxon>
        <taxon>Haplorrhini</taxon>
        <taxon>Catarrhini</taxon>
        <taxon>Hominidae</taxon>
        <taxon>Homo</taxon>
    </lineage>
</organism>